<sequence length="154" mass="16497">MRISIVAIGRLARSPETELVKLYVERATNAGRALGLGPVEVVEVESRKPGKAAEAEALRAHLSDAHVIACDERGAARPSRAFAEEIGRLRDQGVRRLVFLIGGADGLDPALVAQANGKLAFGPQTWPHALARAMLAEQVYRAVSILAGSPYHRD</sequence>
<proteinExistence type="inferred from homology"/>
<reference key="1">
    <citation type="journal article" date="2008" name="BMC Genomics">
        <title>Complete genome of Phenylobacterium zucineum - a novel facultative intracellular bacterium isolated from human erythroleukemia cell line K562.</title>
        <authorList>
            <person name="Luo Y."/>
            <person name="Xu X."/>
            <person name="Ding Z."/>
            <person name="Liu Z."/>
            <person name="Zhang B."/>
            <person name="Yan Z."/>
            <person name="Sun J."/>
            <person name="Hu S."/>
            <person name="Hu X."/>
        </authorList>
    </citation>
    <scope>NUCLEOTIDE SEQUENCE [LARGE SCALE GENOMIC DNA]</scope>
    <source>
        <strain>HLK1</strain>
    </source>
</reference>
<evidence type="ECO:0000255" key="1">
    <source>
        <dbReference type="HAMAP-Rule" id="MF_00658"/>
    </source>
</evidence>
<comment type="function">
    <text evidence="1">Specifically methylates the pseudouridine at position 1915 (m3Psi1915) in 23S rRNA.</text>
</comment>
<comment type="catalytic activity">
    <reaction evidence="1">
        <text>pseudouridine(1915) in 23S rRNA + S-adenosyl-L-methionine = N(3)-methylpseudouridine(1915) in 23S rRNA + S-adenosyl-L-homocysteine + H(+)</text>
        <dbReference type="Rhea" id="RHEA:42752"/>
        <dbReference type="Rhea" id="RHEA-COMP:10221"/>
        <dbReference type="Rhea" id="RHEA-COMP:10222"/>
        <dbReference type="ChEBI" id="CHEBI:15378"/>
        <dbReference type="ChEBI" id="CHEBI:57856"/>
        <dbReference type="ChEBI" id="CHEBI:59789"/>
        <dbReference type="ChEBI" id="CHEBI:65314"/>
        <dbReference type="ChEBI" id="CHEBI:74486"/>
        <dbReference type="EC" id="2.1.1.177"/>
    </reaction>
</comment>
<comment type="subunit">
    <text evidence="1">Homodimer.</text>
</comment>
<comment type="subcellular location">
    <subcellularLocation>
        <location evidence="1">Cytoplasm</location>
    </subcellularLocation>
</comment>
<comment type="similarity">
    <text evidence="1">Belongs to the RNA methyltransferase RlmH family.</text>
</comment>
<name>RLMH_PHEZH</name>
<gene>
    <name evidence="1" type="primary">rlmH</name>
    <name type="ordered locus">PHZ_c0246</name>
</gene>
<accession>B4RD56</accession>
<dbReference type="EC" id="2.1.1.177" evidence="1"/>
<dbReference type="EMBL" id="CP000747">
    <property type="protein sequence ID" value="ACG76660.1"/>
    <property type="molecule type" value="Genomic_DNA"/>
</dbReference>
<dbReference type="RefSeq" id="WP_012520808.1">
    <property type="nucleotide sequence ID" value="NC_011144.1"/>
</dbReference>
<dbReference type="SMR" id="B4RD56"/>
<dbReference type="STRING" id="450851.PHZ_c0246"/>
<dbReference type="KEGG" id="pzu:PHZ_c0246"/>
<dbReference type="eggNOG" id="COG1576">
    <property type="taxonomic scope" value="Bacteria"/>
</dbReference>
<dbReference type="HOGENOM" id="CLU_100552_1_1_5"/>
<dbReference type="OrthoDB" id="9806643at2"/>
<dbReference type="Proteomes" id="UP000001868">
    <property type="component" value="Chromosome"/>
</dbReference>
<dbReference type="GO" id="GO:0005737">
    <property type="term" value="C:cytoplasm"/>
    <property type="evidence" value="ECO:0007669"/>
    <property type="project" value="UniProtKB-SubCell"/>
</dbReference>
<dbReference type="GO" id="GO:0070038">
    <property type="term" value="F:rRNA (pseudouridine-N3-)-methyltransferase activity"/>
    <property type="evidence" value="ECO:0007669"/>
    <property type="project" value="UniProtKB-UniRule"/>
</dbReference>
<dbReference type="CDD" id="cd18081">
    <property type="entry name" value="RlmH-like"/>
    <property type="match status" value="1"/>
</dbReference>
<dbReference type="Gene3D" id="3.40.1280.10">
    <property type="match status" value="1"/>
</dbReference>
<dbReference type="HAMAP" id="MF_00658">
    <property type="entry name" value="23SrRNA_methyltr_H"/>
    <property type="match status" value="1"/>
</dbReference>
<dbReference type="InterPro" id="IPR029028">
    <property type="entry name" value="Alpha/beta_knot_MTases"/>
</dbReference>
<dbReference type="InterPro" id="IPR003742">
    <property type="entry name" value="RlmH-like"/>
</dbReference>
<dbReference type="InterPro" id="IPR029026">
    <property type="entry name" value="tRNA_m1G_MTases_N"/>
</dbReference>
<dbReference type="NCBIfam" id="NF000988">
    <property type="entry name" value="PRK00103.2-2"/>
    <property type="match status" value="1"/>
</dbReference>
<dbReference type="NCBIfam" id="NF000989">
    <property type="entry name" value="PRK00103.2-3"/>
    <property type="match status" value="1"/>
</dbReference>
<dbReference type="PANTHER" id="PTHR33603">
    <property type="entry name" value="METHYLTRANSFERASE"/>
    <property type="match status" value="1"/>
</dbReference>
<dbReference type="PANTHER" id="PTHR33603:SF1">
    <property type="entry name" value="RIBOSOMAL RNA LARGE SUBUNIT METHYLTRANSFERASE H"/>
    <property type="match status" value="1"/>
</dbReference>
<dbReference type="Pfam" id="PF02590">
    <property type="entry name" value="SPOUT_MTase"/>
    <property type="match status" value="1"/>
</dbReference>
<dbReference type="PIRSF" id="PIRSF004505">
    <property type="entry name" value="MT_bac"/>
    <property type="match status" value="1"/>
</dbReference>
<dbReference type="SUPFAM" id="SSF75217">
    <property type="entry name" value="alpha/beta knot"/>
    <property type="match status" value="1"/>
</dbReference>
<keyword id="KW-0963">Cytoplasm</keyword>
<keyword id="KW-0489">Methyltransferase</keyword>
<keyword id="KW-1185">Reference proteome</keyword>
<keyword id="KW-0698">rRNA processing</keyword>
<keyword id="KW-0949">S-adenosyl-L-methionine</keyword>
<keyword id="KW-0808">Transferase</keyword>
<organism>
    <name type="scientific">Phenylobacterium zucineum (strain HLK1)</name>
    <dbReference type="NCBI Taxonomy" id="450851"/>
    <lineage>
        <taxon>Bacteria</taxon>
        <taxon>Pseudomonadati</taxon>
        <taxon>Pseudomonadota</taxon>
        <taxon>Alphaproteobacteria</taxon>
        <taxon>Caulobacterales</taxon>
        <taxon>Caulobacteraceae</taxon>
        <taxon>Phenylobacterium</taxon>
    </lineage>
</organism>
<feature type="chain" id="PRO_0000366634" description="Ribosomal RNA large subunit methyltransferase H">
    <location>
        <begin position="1"/>
        <end position="154"/>
    </location>
</feature>
<feature type="binding site" evidence="1">
    <location>
        <position position="102"/>
    </location>
    <ligand>
        <name>S-adenosyl-L-methionine</name>
        <dbReference type="ChEBI" id="CHEBI:59789"/>
    </ligand>
</feature>
<protein>
    <recommendedName>
        <fullName evidence="1">Ribosomal RNA large subunit methyltransferase H</fullName>
        <ecNumber evidence="1">2.1.1.177</ecNumber>
    </recommendedName>
    <alternativeName>
        <fullName evidence="1">23S rRNA (pseudouridine1915-N3)-methyltransferase</fullName>
    </alternativeName>
    <alternativeName>
        <fullName evidence="1">23S rRNA m3Psi1915 methyltransferase</fullName>
    </alternativeName>
    <alternativeName>
        <fullName evidence="1">rRNA (pseudouridine-N3-)-methyltransferase RlmH</fullName>
    </alternativeName>
</protein>